<feature type="chain" id="PRO_0000352901" description="Threonylcarbamoyl-AMP synthase">
    <location>
        <begin position="1"/>
        <end position="194"/>
    </location>
</feature>
<feature type="domain" description="YrdC-like" evidence="1">
    <location>
        <begin position="12"/>
        <end position="194"/>
    </location>
</feature>
<name>TSAC_BLOPB</name>
<protein>
    <recommendedName>
        <fullName evidence="1">Threonylcarbamoyl-AMP synthase</fullName>
        <shortName evidence="1">TC-AMP synthase</shortName>
        <ecNumber evidence="1">2.7.7.87</ecNumber>
    </recommendedName>
    <alternativeName>
        <fullName evidence="1">L-threonylcarbamoyladenylate synthase</fullName>
    </alternativeName>
    <alternativeName>
        <fullName evidence="1">t(6)A37 threonylcarbamoyladenosine biosynthesis protein TsaC</fullName>
    </alternativeName>
    <alternativeName>
        <fullName evidence="1">tRNA threonylcarbamoyladenosine biosynthesis protein TsaC</fullName>
    </alternativeName>
</protein>
<sequence length="194" mass="21878">MELLSTIRIFSSPNMKDLLIQLSQGKVIIYPTESVFGLGCDPDNKNAISTLLKIKNRSWKKGLILVAANYTQLLKYIDDSCLNETQRSRVFSTWPGPMTWVFPAQANRSYWLTGQFSSVAVRVSHFEPIQRLCLAFGKPLVSTSANLSGQLPARTIEEVHDQLGYKIPIMHEDILGRPNPSKIRDVMTGKLIRE</sequence>
<comment type="function">
    <text evidence="1">Required for the formation of a threonylcarbamoyl group on adenosine at position 37 (t(6)A37) in tRNAs that read codons beginning with adenine. Catalyzes the conversion of L-threonine, HCO(3)(-)/CO(2) and ATP to give threonylcarbamoyl-AMP (TC-AMP) as the acyladenylate intermediate, with the release of diphosphate.</text>
</comment>
<comment type="catalytic activity">
    <reaction evidence="1">
        <text>L-threonine + hydrogencarbonate + ATP = L-threonylcarbamoyladenylate + diphosphate + H2O</text>
        <dbReference type="Rhea" id="RHEA:36407"/>
        <dbReference type="ChEBI" id="CHEBI:15377"/>
        <dbReference type="ChEBI" id="CHEBI:17544"/>
        <dbReference type="ChEBI" id="CHEBI:30616"/>
        <dbReference type="ChEBI" id="CHEBI:33019"/>
        <dbReference type="ChEBI" id="CHEBI:57926"/>
        <dbReference type="ChEBI" id="CHEBI:73682"/>
        <dbReference type="EC" id="2.7.7.87"/>
    </reaction>
</comment>
<comment type="subcellular location">
    <subcellularLocation>
        <location evidence="1">Cytoplasm</location>
    </subcellularLocation>
</comment>
<comment type="similarity">
    <text evidence="1">Belongs to the SUA5 family. TsaC subfamily.</text>
</comment>
<gene>
    <name evidence="1" type="primary">tsaC</name>
    <name type="synonym">rimN</name>
    <name type="ordered locus">BPEN_227</name>
</gene>
<reference key="1">
    <citation type="journal article" date="2005" name="Genome Res.">
        <title>Genome sequence of Blochmannia pennsylvanicus indicates parallel evolutionary trends among bacterial mutualists of insects.</title>
        <authorList>
            <person name="Degnan P.H."/>
            <person name="Lazarus A.B."/>
            <person name="Wernegreen J.J."/>
        </authorList>
    </citation>
    <scope>NUCLEOTIDE SEQUENCE [LARGE SCALE GENOMIC DNA]</scope>
    <source>
        <strain>BPEN</strain>
    </source>
</reference>
<proteinExistence type="inferred from homology"/>
<keyword id="KW-0067">ATP-binding</keyword>
<keyword id="KW-0963">Cytoplasm</keyword>
<keyword id="KW-0547">Nucleotide-binding</keyword>
<keyword id="KW-0548">Nucleotidyltransferase</keyword>
<keyword id="KW-1185">Reference proteome</keyword>
<keyword id="KW-0808">Transferase</keyword>
<keyword id="KW-0819">tRNA processing</keyword>
<evidence type="ECO:0000255" key="1">
    <source>
        <dbReference type="HAMAP-Rule" id="MF_01852"/>
    </source>
</evidence>
<accession>Q493I0</accession>
<dbReference type="EC" id="2.7.7.87" evidence="1"/>
<dbReference type="EMBL" id="CP000016">
    <property type="protein sequence ID" value="AAZ40860.1"/>
    <property type="molecule type" value="Genomic_DNA"/>
</dbReference>
<dbReference type="SMR" id="Q493I0"/>
<dbReference type="STRING" id="291272.BPEN_227"/>
<dbReference type="KEGG" id="bpn:BPEN_227"/>
<dbReference type="eggNOG" id="COG0009">
    <property type="taxonomic scope" value="Bacteria"/>
</dbReference>
<dbReference type="HOGENOM" id="CLU_031397_6_0_6"/>
<dbReference type="Proteomes" id="UP000007794">
    <property type="component" value="Chromosome"/>
</dbReference>
<dbReference type="GO" id="GO:0005737">
    <property type="term" value="C:cytoplasm"/>
    <property type="evidence" value="ECO:0007669"/>
    <property type="project" value="UniProtKB-SubCell"/>
</dbReference>
<dbReference type="GO" id="GO:0005524">
    <property type="term" value="F:ATP binding"/>
    <property type="evidence" value="ECO:0007669"/>
    <property type="project" value="UniProtKB-UniRule"/>
</dbReference>
<dbReference type="GO" id="GO:0003725">
    <property type="term" value="F:double-stranded RNA binding"/>
    <property type="evidence" value="ECO:0007669"/>
    <property type="project" value="InterPro"/>
</dbReference>
<dbReference type="GO" id="GO:0061710">
    <property type="term" value="F:L-threonylcarbamoyladenylate synthase"/>
    <property type="evidence" value="ECO:0007669"/>
    <property type="project" value="UniProtKB-EC"/>
</dbReference>
<dbReference type="GO" id="GO:0000049">
    <property type="term" value="F:tRNA binding"/>
    <property type="evidence" value="ECO:0007669"/>
    <property type="project" value="TreeGrafter"/>
</dbReference>
<dbReference type="GO" id="GO:0006450">
    <property type="term" value="P:regulation of translational fidelity"/>
    <property type="evidence" value="ECO:0007669"/>
    <property type="project" value="TreeGrafter"/>
</dbReference>
<dbReference type="GO" id="GO:0002949">
    <property type="term" value="P:tRNA threonylcarbamoyladenosine modification"/>
    <property type="evidence" value="ECO:0007669"/>
    <property type="project" value="UniProtKB-UniRule"/>
</dbReference>
<dbReference type="FunFam" id="3.90.870.10:FF:000004">
    <property type="entry name" value="Threonylcarbamoyl-AMP synthase"/>
    <property type="match status" value="1"/>
</dbReference>
<dbReference type="Gene3D" id="3.90.870.10">
    <property type="entry name" value="DHBP synthase"/>
    <property type="match status" value="1"/>
</dbReference>
<dbReference type="HAMAP" id="MF_01852">
    <property type="entry name" value="TsaC"/>
    <property type="match status" value="1"/>
</dbReference>
<dbReference type="InterPro" id="IPR017945">
    <property type="entry name" value="DHBP_synth_RibB-like_a/b_dom"/>
</dbReference>
<dbReference type="InterPro" id="IPR006070">
    <property type="entry name" value="Sua5-like_dom"/>
</dbReference>
<dbReference type="InterPro" id="IPR023535">
    <property type="entry name" value="TC-AMP_synthase"/>
</dbReference>
<dbReference type="InterPro" id="IPR050156">
    <property type="entry name" value="TC-AMP_synthase_SUA5"/>
</dbReference>
<dbReference type="PANTHER" id="PTHR17490">
    <property type="entry name" value="SUA5"/>
    <property type="match status" value="1"/>
</dbReference>
<dbReference type="PANTHER" id="PTHR17490:SF18">
    <property type="entry name" value="THREONYLCARBAMOYL-AMP SYNTHASE"/>
    <property type="match status" value="1"/>
</dbReference>
<dbReference type="Pfam" id="PF01300">
    <property type="entry name" value="Sua5_yciO_yrdC"/>
    <property type="match status" value="1"/>
</dbReference>
<dbReference type="SUPFAM" id="SSF55821">
    <property type="entry name" value="YrdC/RibB"/>
    <property type="match status" value="1"/>
</dbReference>
<dbReference type="PROSITE" id="PS51163">
    <property type="entry name" value="YRDC"/>
    <property type="match status" value="1"/>
</dbReference>
<organism>
    <name type="scientific">Blochmanniella pennsylvanica (strain BPEN)</name>
    <dbReference type="NCBI Taxonomy" id="291272"/>
    <lineage>
        <taxon>Bacteria</taxon>
        <taxon>Pseudomonadati</taxon>
        <taxon>Pseudomonadota</taxon>
        <taxon>Gammaproteobacteria</taxon>
        <taxon>Enterobacterales</taxon>
        <taxon>Enterobacteriaceae</taxon>
        <taxon>ant endosymbionts</taxon>
        <taxon>Candidatus Blochmanniella</taxon>
    </lineage>
</organism>